<organism>
    <name type="scientific">Staphylococcus aureus (strain Newman)</name>
    <dbReference type="NCBI Taxonomy" id="426430"/>
    <lineage>
        <taxon>Bacteria</taxon>
        <taxon>Bacillati</taxon>
        <taxon>Bacillota</taxon>
        <taxon>Bacilli</taxon>
        <taxon>Bacillales</taxon>
        <taxon>Staphylococcaceae</taxon>
        <taxon>Staphylococcus</taxon>
    </lineage>
</organism>
<sequence length="263" mass="28090">MNYLNKIRIENPLTICYTNDVVKNFTANGLLSIGASPAMSEAPEEAEEFYKVAQALLINIGTLTAENEQDIIAIAQTANEAGLPIVFDPVAVGASTYRKQFCKLLLKSAKVSVIKGNASEILALIDDTATMKGTDSDANLDAVAIAKKAYATYKTAIVITGKEDVIVQDNKAFVLANGSPLLARVTGAGCLLGGVIAGFLFRETEPDIEALIEAVSVFNIAAEVAAENENCGGPGTFSPLLLDTLYHLNETTYQQRIRIQEVE</sequence>
<comment type="function">
    <text evidence="1">Catalyzes the phosphorylation of the hydroxyl group of 4-methyl-5-beta-hydroxyethylthiazole (THZ).</text>
</comment>
<comment type="catalytic activity">
    <reaction evidence="1">
        <text>5-(2-hydroxyethyl)-4-methylthiazole + ATP = 4-methyl-5-(2-phosphooxyethyl)-thiazole + ADP + H(+)</text>
        <dbReference type="Rhea" id="RHEA:24212"/>
        <dbReference type="ChEBI" id="CHEBI:15378"/>
        <dbReference type="ChEBI" id="CHEBI:17957"/>
        <dbReference type="ChEBI" id="CHEBI:30616"/>
        <dbReference type="ChEBI" id="CHEBI:58296"/>
        <dbReference type="ChEBI" id="CHEBI:456216"/>
        <dbReference type="EC" id="2.7.1.50"/>
    </reaction>
</comment>
<comment type="cofactor">
    <cofactor evidence="1">
        <name>Mg(2+)</name>
        <dbReference type="ChEBI" id="CHEBI:18420"/>
    </cofactor>
</comment>
<comment type="pathway">
    <text evidence="1">Cofactor biosynthesis; thiamine diphosphate biosynthesis; 4-methyl-5-(2-phosphoethyl)-thiazole from 5-(2-hydroxyethyl)-4-methylthiazole: step 1/1.</text>
</comment>
<comment type="similarity">
    <text evidence="1">Belongs to the Thz kinase family.</text>
</comment>
<feature type="chain" id="PRO_1000071785" description="Hydroxyethylthiazole kinase">
    <location>
        <begin position="1"/>
        <end position="263"/>
    </location>
</feature>
<feature type="binding site" evidence="1">
    <location>
        <position position="39"/>
    </location>
    <ligand>
        <name>substrate</name>
    </ligand>
</feature>
<feature type="binding site" evidence="1">
    <location>
        <position position="115"/>
    </location>
    <ligand>
        <name>ATP</name>
        <dbReference type="ChEBI" id="CHEBI:30616"/>
    </ligand>
</feature>
<feature type="binding site" evidence="1">
    <location>
        <position position="160"/>
    </location>
    <ligand>
        <name>ATP</name>
        <dbReference type="ChEBI" id="CHEBI:30616"/>
    </ligand>
</feature>
<feature type="binding site" evidence="1">
    <location>
        <position position="187"/>
    </location>
    <ligand>
        <name>substrate</name>
    </ligand>
</feature>
<dbReference type="EC" id="2.7.1.50" evidence="1"/>
<dbReference type="EMBL" id="AP009351">
    <property type="protein sequence ID" value="BAF68268.1"/>
    <property type="molecule type" value="Genomic_DNA"/>
</dbReference>
<dbReference type="RefSeq" id="WP_001108479.1">
    <property type="nucleotide sequence ID" value="NZ_JBBIAE010000008.1"/>
</dbReference>
<dbReference type="SMR" id="A6QIT6"/>
<dbReference type="KEGG" id="sae:NWMN_1996"/>
<dbReference type="HOGENOM" id="CLU_019943_0_2_9"/>
<dbReference type="UniPathway" id="UPA00060">
    <property type="reaction ID" value="UER00139"/>
</dbReference>
<dbReference type="Proteomes" id="UP000006386">
    <property type="component" value="Chromosome"/>
</dbReference>
<dbReference type="GO" id="GO:0005524">
    <property type="term" value="F:ATP binding"/>
    <property type="evidence" value="ECO:0007669"/>
    <property type="project" value="UniProtKB-UniRule"/>
</dbReference>
<dbReference type="GO" id="GO:0004417">
    <property type="term" value="F:hydroxyethylthiazole kinase activity"/>
    <property type="evidence" value="ECO:0007669"/>
    <property type="project" value="UniProtKB-UniRule"/>
</dbReference>
<dbReference type="GO" id="GO:0000287">
    <property type="term" value="F:magnesium ion binding"/>
    <property type="evidence" value="ECO:0007669"/>
    <property type="project" value="UniProtKB-UniRule"/>
</dbReference>
<dbReference type="GO" id="GO:0009228">
    <property type="term" value="P:thiamine biosynthetic process"/>
    <property type="evidence" value="ECO:0007669"/>
    <property type="project" value="UniProtKB-KW"/>
</dbReference>
<dbReference type="GO" id="GO:0009229">
    <property type="term" value="P:thiamine diphosphate biosynthetic process"/>
    <property type="evidence" value="ECO:0007669"/>
    <property type="project" value="UniProtKB-UniRule"/>
</dbReference>
<dbReference type="CDD" id="cd01170">
    <property type="entry name" value="THZ_kinase"/>
    <property type="match status" value="1"/>
</dbReference>
<dbReference type="Gene3D" id="3.40.1190.20">
    <property type="match status" value="1"/>
</dbReference>
<dbReference type="HAMAP" id="MF_00228">
    <property type="entry name" value="Thz_kinase"/>
    <property type="match status" value="1"/>
</dbReference>
<dbReference type="InterPro" id="IPR000417">
    <property type="entry name" value="Hyethyz_kinase"/>
</dbReference>
<dbReference type="InterPro" id="IPR029056">
    <property type="entry name" value="Ribokinase-like"/>
</dbReference>
<dbReference type="NCBIfam" id="NF006830">
    <property type="entry name" value="PRK09355.1"/>
    <property type="match status" value="1"/>
</dbReference>
<dbReference type="Pfam" id="PF02110">
    <property type="entry name" value="HK"/>
    <property type="match status" value="1"/>
</dbReference>
<dbReference type="PIRSF" id="PIRSF000513">
    <property type="entry name" value="Thz_kinase"/>
    <property type="match status" value="1"/>
</dbReference>
<dbReference type="PRINTS" id="PR01099">
    <property type="entry name" value="HYETHTZKNASE"/>
</dbReference>
<dbReference type="SUPFAM" id="SSF53613">
    <property type="entry name" value="Ribokinase-like"/>
    <property type="match status" value="1"/>
</dbReference>
<keyword id="KW-0067">ATP-binding</keyword>
<keyword id="KW-0418">Kinase</keyword>
<keyword id="KW-0460">Magnesium</keyword>
<keyword id="KW-0479">Metal-binding</keyword>
<keyword id="KW-0547">Nucleotide-binding</keyword>
<keyword id="KW-0784">Thiamine biosynthesis</keyword>
<keyword id="KW-0808">Transferase</keyword>
<name>THIM_STAAE</name>
<gene>
    <name evidence="1" type="primary">thiM</name>
    <name type="ordered locus">NWMN_1996</name>
</gene>
<protein>
    <recommendedName>
        <fullName evidence="1">Hydroxyethylthiazole kinase</fullName>
        <ecNumber evidence="1">2.7.1.50</ecNumber>
    </recommendedName>
    <alternativeName>
        <fullName evidence="1">4-methyl-5-beta-hydroxyethylthiazole kinase</fullName>
        <shortName evidence="1">TH kinase</shortName>
        <shortName evidence="1">Thz kinase</shortName>
    </alternativeName>
</protein>
<evidence type="ECO:0000255" key="1">
    <source>
        <dbReference type="HAMAP-Rule" id="MF_00228"/>
    </source>
</evidence>
<reference key="1">
    <citation type="journal article" date="2008" name="J. Bacteriol.">
        <title>Genome sequence of Staphylococcus aureus strain Newman and comparative analysis of staphylococcal genomes: polymorphism and evolution of two major pathogenicity islands.</title>
        <authorList>
            <person name="Baba T."/>
            <person name="Bae T."/>
            <person name="Schneewind O."/>
            <person name="Takeuchi F."/>
            <person name="Hiramatsu K."/>
        </authorList>
    </citation>
    <scope>NUCLEOTIDE SEQUENCE [LARGE SCALE GENOMIC DNA]</scope>
    <source>
        <strain>Newman</strain>
    </source>
</reference>
<accession>A6QIT6</accession>
<proteinExistence type="inferred from homology"/>